<sequence length="2036" mass="231208">MISMMETSTTEKKSNTDNSILKKIIIDSWRQRLSPIEWSLKLYNGFYNNNNNNNSNNNNNNNNNNNNNNVDNNEINSIELCEILLDLMNIGQSPSPLLVSYLRYAISIKLIGYNEFFESVYKFSSISRAQHFSVILDILFDVINIINYPSHHQNIFNSDNIENSNNNNNNNNNNNNNNSNNNIGFKVSSLSSSLKRNNSKIISTPIVTLLSSPSPSSSSSSSTSPSSQQPQPPQPQPLSYTSPIKKTVLIKNPDSTDSDEIMKVKEEPIKFKTTTTTTSTTTTTSTTSTTTNEISSSPPTNGNGEETTITTKTEDSNGINGIDSEDHKGENGKASPQMNGVHPGSDGNISHKRKEMDSNTIFDDDDSNGVDQHCSNKKMKHTDTLTQPQPKQIQNPQQQEQQQQQQENIEQNQHGNLHLHQPSQQQQQQQQQTSQPSLTTTTASAVTQTTTTASTINKSTKATTKKNYHKQLLSFTRLATLLFKVIEYYFQEDERINNINKSVNNNNNNNNNNNNNNNNNNNNNYNNNNNDSMDQNSNNPAVKYNSNNNNINNNNNNNNNNNNNNNNNNNNNNNNNNNNNINNILYKNSVKSLEILSIIQNNSTFKTLIYLAKYEFTLSSFKDLVLPFLAIQNSIRDNIVKQNIPSTQLISSQVKGQEFASQQTQLLNPLFQLIKQKYQKLFIDFRRILINKQEILPNHDIGSLVHGSSQSDKQIILSFEIIIDQEINGNHFKSSHTKLAISRGKPNELDTILNLKNNKNNNNNNNNSNGNGNGIDIGSSTDGSNKLSSTNIEEGNNNNNSSTHLNGNDQSQQSLDDEEPKQSQQQQLPPPSPPQQSHQKIQIQKQLQLIRQAKNLENVSDCFFKLLTLKTVKGLSDVEFLLEIVKILFQKLVRCNPNSNEYKKTRLFLLFKIPHFYSLMIDNYGNNNNNNNTNTNNINNNKNKNSKKSNNKNKNNKNNNKKNKNNNNNNNNNNNNNNNNNNNNNNNNNNNNNNNNNNNGESSDKNEINPEGSIGSNNNNDNDNNDETNTNTSSNNNNNNNNSNDNENVTDNNKNNNSNTKNNNNSNNNNNNNNNNNNNNNNNNNNNNNNNNNNNNNNNNNNNNNNNNNNNNNNNNNNKKNKDLNLHGNIIENVLYQINQFPSLYNVEDNIILSLIQILIKKHLVDINLLKSLFPNYHTDIDSIDSEIQSPPSSELSFDNLFDIHSIADIVKIKELIESLLNNSDPNNVSIMKRLFDFIKNHLINSFDYQDKLLNVLFNAKNIDYDSNKLLIAVIMYIFSDPLVIDTIDVHGYTLRLVMILIDVCESYGSSTTATTTEDIDIFKNENDNHDQKHLYFYFTIPFNLLYTLLIILYDVKNNKYNLDLIKSKLSESLNNKNNSRKSKSNNSSNNSINNINNNNNNNNNNNNNNNNNNNNNNNNNNFIQWIYNMIKDTNFSNGNGVNNVSTSFEFQFLKNLFDSDLGEDSIEKFQNFSQREYSSWDIVSKLPNVLYNIFDCYDRNIIQEEKVTQTMQLLFQYIPFSPIIVFDYLSKTKSSFFNVSPSSSTTTTTTTTSTTTTITTTTTNSSAYSTTTTTSASTSLPKSTDGKLLNGKSSNTSTTTTKNNGDTPTITTVITTMSSKNDKPLSLVEACLTNLNENRLLFRLSDYYKSLISEDHLNDLYKLFDPISETINLLLLSPKLQKFNELGYYSNQSTLFNSICLTNLSPPNQLSNMTPANAIRQVIDQFLTKSVSPNLSNLERDIKYIHMRLSNDLCQIVNLVSLEILDIILQSCQIESLYSIRAMELGGYILGGLIGIESLPILLNSIIPSWSEHIQTSLHGQLLSYFCFSSIVNSNALYYIQTDLCIQQSFKKFFLLLNDTMKRILSVAPLNGLITFCLSTITLFIHLNHSSITTYLYNSSSNTQLINQLYEIISKNQSLKKKQKLKQKKQQHNNNNGGEYNIDQDHIEQIQQQQQQYQKQQQQRKDEPNYEKLEEFIKTQYQRNNHSKLKSIFNILSISQLEDLSMSILNLSNFFLAISIFEDKNDLQYCSKLFN</sequence>
<proteinExistence type="inferred from homology"/>
<protein>
    <recommendedName>
        <fullName>Putative mediator of RNA polymerase II transcription subunit 24</fullName>
    </recommendedName>
    <alternativeName>
        <fullName>Putative mediator complex subunit 24</fullName>
    </alternativeName>
    <alternativeName>
        <fullName>Putative mediator complex subunit 5</fullName>
    </alternativeName>
    <alternativeName>
        <fullName>Putative mediator of RNA polymerase II transcription subunit 5</fullName>
    </alternativeName>
</protein>
<dbReference type="EMBL" id="AAFI02000149">
    <property type="protein sequence ID" value="EAL62498.2"/>
    <property type="molecule type" value="Genomic_DNA"/>
</dbReference>
<dbReference type="RefSeq" id="XP_635969.2">
    <property type="nucleotide sequence ID" value="XM_630877.2"/>
</dbReference>
<dbReference type="SMR" id="Q54GV0"/>
<dbReference type="FunCoup" id="Q54GV0">
    <property type="interactions" value="492"/>
</dbReference>
<dbReference type="STRING" id="44689.Q54GV0"/>
<dbReference type="PaxDb" id="44689-DDB0266954"/>
<dbReference type="EnsemblProtists" id="EAL62498">
    <property type="protein sequence ID" value="EAL62498"/>
    <property type="gene ID" value="DDB_G0289971"/>
</dbReference>
<dbReference type="GeneID" id="8627384"/>
<dbReference type="KEGG" id="ddi:DDB_G0289971"/>
<dbReference type="dictyBase" id="DDB_G0289971">
    <property type="gene designation" value="med24"/>
</dbReference>
<dbReference type="VEuPathDB" id="AmoebaDB:DDB_G0289971"/>
<dbReference type="eggNOG" id="ENOG502RDM1">
    <property type="taxonomic scope" value="Eukaryota"/>
</dbReference>
<dbReference type="HOGENOM" id="CLU_233347_0_0_1"/>
<dbReference type="InParanoid" id="Q54GV0"/>
<dbReference type="OMA" id="YFYFTIP"/>
<dbReference type="PRO" id="PR:Q54GV0"/>
<dbReference type="Proteomes" id="UP000002195">
    <property type="component" value="Chromosome 5"/>
</dbReference>
<dbReference type="GO" id="GO:0016592">
    <property type="term" value="C:mediator complex"/>
    <property type="evidence" value="ECO:0000250"/>
    <property type="project" value="dictyBase"/>
</dbReference>
<dbReference type="GO" id="GO:0003712">
    <property type="term" value="F:transcription coregulator activity"/>
    <property type="evidence" value="ECO:0000318"/>
    <property type="project" value="GO_Central"/>
</dbReference>
<dbReference type="GO" id="GO:0060261">
    <property type="term" value="P:positive regulation of transcription initiation by RNA polymerase II"/>
    <property type="evidence" value="ECO:0000318"/>
    <property type="project" value="GO_Central"/>
</dbReference>
<dbReference type="InterPro" id="IPR021429">
    <property type="entry name" value="Mediator_Med24"/>
</dbReference>
<dbReference type="PANTHER" id="PTHR12898">
    <property type="entry name" value="MEDIATOR OF RNA POLYMERASE II TRANSCRIPTION SUBUNIT 24"/>
    <property type="match status" value="1"/>
</dbReference>
<dbReference type="PANTHER" id="PTHR12898:SF1">
    <property type="entry name" value="MEDIATOR OF RNA POLYMERASE II TRANSCRIPTION SUBUNIT 24"/>
    <property type="match status" value="1"/>
</dbReference>
<accession>Q54GV0</accession>
<reference key="1">
    <citation type="journal article" date="2005" name="Nature">
        <title>The genome of the social amoeba Dictyostelium discoideum.</title>
        <authorList>
            <person name="Eichinger L."/>
            <person name="Pachebat J.A."/>
            <person name="Gloeckner G."/>
            <person name="Rajandream M.A."/>
            <person name="Sucgang R."/>
            <person name="Berriman M."/>
            <person name="Song J."/>
            <person name="Olsen R."/>
            <person name="Szafranski K."/>
            <person name="Xu Q."/>
            <person name="Tunggal B."/>
            <person name="Kummerfeld S."/>
            <person name="Madera M."/>
            <person name="Konfortov B.A."/>
            <person name="Rivero F."/>
            <person name="Bankier A.T."/>
            <person name="Lehmann R."/>
            <person name="Hamlin N."/>
            <person name="Davies R."/>
            <person name="Gaudet P."/>
            <person name="Fey P."/>
            <person name="Pilcher K."/>
            <person name="Chen G."/>
            <person name="Saunders D."/>
            <person name="Sodergren E.J."/>
            <person name="Davis P."/>
            <person name="Kerhornou A."/>
            <person name="Nie X."/>
            <person name="Hall N."/>
            <person name="Anjard C."/>
            <person name="Hemphill L."/>
            <person name="Bason N."/>
            <person name="Farbrother P."/>
            <person name="Desany B."/>
            <person name="Just E."/>
            <person name="Morio T."/>
            <person name="Rost R."/>
            <person name="Churcher C.M."/>
            <person name="Cooper J."/>
            <person name="Haydock S."/>
            <person name="van Driessche N."/>
            <person name="Cronin A."/>
            <person name="Goodhead I."/>
            <person name="Muzny D.M."/>
            <person name="Mourier T."/>
            <person name="Pain A."/>
            <person name="Lu M."/>
            <person name="Harper D."/>
            <person name="Lindsay R."/>
            <person name="Hauser H."/>
            <person name="James K.D."/>
            <person name="Quiles M."/>
            <person name="Madan Babu M."/>
            <person name="Saito T."/>
            <person name="Buchrieser C."/>
            <person name="Wardroper A."/>
            <person name="Felder M."/>
            <person name="Thangavelu M."/>
            <person name="Johnson D."/>
            <person name="Knights A."/>
            <person name="Loulseged H."/>
            <person name="Mungall K.L."/>
            <person name="Oliver K."/>
            <person name="Price C."/>
            <person name="Quail M.A."/>
            <person name="Urushihara H."/>
            <person name="Hernandez J."/>
            <person name="Rabbinowitsch E."/>
            <person name="Steffen D."/>
            <person name="Sanders M."/>
            <person name="Ma J."/>
            <person name="Kohara Y."/>
            <person name="Sharp S."/>
            <person name="Simmonds M.N."/>
            <person name="Spiegler S."/>
            <person name="Tivey A."/>
            <person name="Sugano S."/>
            <person name="White B."/>
            <person name="Walker D."/>
            <person name="Woodward J.R."/>
            <person name="Winckler T."/>
            <person name="Tanaka Y."/>
            <person name="Shaulsky G."/>
            <person name="Schleicher M."/>
            <person name="Weinstock G.M."/>
            <person name="Rosenthal A."/>
            <person name="Cox E.C."/>
            <person name="Chisholm R.L."/>
            <person name="Gibbs R.A."/>
            <person name="Loomis W.F."/>
            <person name="Platzer M."/>
            <person name="Kay R.R."/>
            <person name="Williams J.G."/>
            <person name="Dear P.H."/>
            <person name="Noegel A.A."/>
            <person name="Barrell B.G."/>
            <person name="Kuspa A."/>
        </authorList>
    </citation>
    <scope>NUCLEOTIDE SEQUENCE [LARGE SCALE GENOMIC DNA]</scope>
    <source>
        <strain>AX4</strain>
    </source>
</reference>
<reference key="2">
    <citation type="journal article" date="2008" name="Nucleic Acids Res.">
        <title>Comparative genomics supports a deep evolutionary origin for the large, four-module transcriptional mediator complex.</title>
        <authorList>
            <person name="Bourbon H.-M."/>
        </authorList>
    </citation>
    <scope>NOMENCLATURE</scope>
</reference>
<feature type="chain" id="PRO_0000388645" description="Putative mediator of RNA polymerase II transcription subunit 24">
    <location>
        <begin position="1"/>
        <end position="2036"/>
    </location>
</feature>
<feature type="region of interest" description="Disordered" evidence="3">
    <location>
        <begin position="51"/>
        <end position="70"/>
    </location>
</feature>
<feature type="region of interest" description="Disordered" evidence="3">
    <location>
        <begin position="159"/>
        <end position="184"/>
    </location>
</feature>
<feature type="region of interest" description="Disordered" evidence="3">
    <location>
        <begin position="212"/>
        <end position="451"/>
    </location>
</feature>
<feature type="region of interest" description="Disordered" evidence="3">
    <location>
        <begin position="501"/>
        <end position="580"/>
    </location>
</feature>
<feature type="region of interest" description="Disordered" evidence="3">
    <location>
        <begin position="754"/>
        <end position="840"/>
    </location>
</feature>
<feature type="region of interest" description="Disordered" evidence="3">
    <location>
        <begin position="928"/>
        <end position="1124"/>
    </location>
</feature>
<feature type="region of interest" description="Disordered" evidence="3">
    <location>
        <begin position="1375"/>
        <end position="1419"/>
    </location>
</feature>
<feature type="region of interest" description="Disordered" evidence="3">
    <location>
        <begin position="1565"/>
        <end position="1608"/>
    </location>
</feature>
<feature type="coiled-coil region" evidence="2">
    <location>
        <begin position="505"/>
        <end position="584"/>
    </location>
</feature>
<feature type="coiled-coil region" evidence="2">
    <location>
        <begin position="943"/>
        <end position="977"/>
    </location>
</feature>
<feature type="coiled-coil region" evidence="2">
    <location>
        <begin position="1915"/>
        <end position="1968"/>
    </location>
</feature>
<feature type="compositionally biased region" description="Low complexity" evidence="3">
    <location>
        <begin position="212"/>
        <end position="229"/>
    </location>
</feature>
<feature type="compositionally biased region" description="Basic and acidic residues" evidence="3">
    <location>
        <begin position="260"/>
        <end position="270"/>
    </location>
</feature>
<feature type="compositionally biased region" description="Low complexity" evidence="3">
    <location>
        <begin position="273"/>
        <end position="291"/>
    </location>
</feature>
<feature type="compositionally biased region" description="Low complexity" evidence="3">
    <location>
        <begin position="300"/>
        <end position="311"/>
    </location>
</feature>
<feature type="compositionally biased region" description="Low complexity" evidence="3">
    <location>
        <begin position="387"/>
        <end position="451"/>
    </location>
</feature>
<feature type="compositionally biased region" description="Low complexity" evidence="3">
    <location>
        <begin position="501"/>
        <end position="539"/>
    </location>
</feature>
<feature type="compositionally biased region" description="Low complexity" evidence="3">
    <location>
        <begin position="547"/>
        <end position="580"/>
    </location>
</feature>
<feature type="compositionally biased region" description="Low complexity" evidence="3">
    <location>
        <begin position="754"/>
        <end position="770"/>
    </location>
</feature>
<feature type="compositionally biased region" description="Polar residues" evidence="3">
    <location>
        <begin position="778"/>
        <end position="787"/>
    </location>
</feature>
<feature type="compositionally biased region" description="Low complexity" evidence="3">
    <location>
        <begin position="788"/>
        <end position="808"/>
    </location>
</feature>
<feature type="compositionally biased region" description="Low complexity" evidence="3">
    <location>
        <begin position="928"/>
        <end position="943"/>
    </location>
</feature>
<feature type="compositionally biased region" description="Basic residues" evidence="3">
    <location>
        <begin position="944"/>
        <end position="964"/>
    </location>
</feature>
<feature type="compositionally biased region" description="Low complexity" evidence="3">
    <location>
        <begin position="965"/>
        <end position="999"/>
    </location>
</feature>
<feature type="compositionally biased region" description="Low complexity" evidence="3">
    <location>
        <begin position="1017"/>
        <end position="1118"/>
    </location>
</feature>
<feature type="compositionally biased region" description="Low complexity" evidence="3">
    <location>
        <begin position="1385"/>
        <end position="1419"/>
    </location>
</feature>
<feature type="compositionally biased region" description="Low complexity" evidence="3">
    <location>
        <begin position="1565"/>
        <end position="1584"/>
    </location>
</feature>
<feature type="compositionally biased region" description="Low complexity" evidence="3">
    <location>
        <begin position="1594"/>
        <end position="1608"/>
    </location>
</feature>
<comment type="function">
    <text evidence="1">Component of the Mediator complex, a coactivator involved in the regulated transcription of nearly all RNA polymerase II-dependent genes. Mediator functions as a bridge to convey information from gene-specific regulatory proteins to the basal RNA polymerase II transcription machinery. Mediator is recruited to promoters by direct interactions with regulatory proteins and serves as a scaffold for the assembly of a functional preinitiation complex with RNA polymerase II and the general transcription factors (By similarity).</text>
</comment>
<comment type="subunit">
    <text evidence="1">Component of the Mediator complex.</text>
</comment>
<comment type="subcellular location">
    <subcellularLocation>
        <location evidence="4">Nucleus</location>
    </subcellularLocation>
</comment>
<comment type="similarity">
    <text evidence="4">Belongs to the Mediator complex subunit 24 family.</text>
</comment>
<name>MED24_DICDI</name>
<evidence type="ECO:0000250" key="1"/>
<evidence type="ECO:0000255" key="2"/>
<evidence type="ECO:0000256" key="3">
    <source>
        <dbReference type="SAM" id="MobiDB-lite"/>
    </source>
</evidence>
<evidence type="ECO:0000305" key="4"/>
<organism>
    <name type="scientific">Dictyostelium discoideum</name>
    <name type="common">Social amoeba</name>
    <dbReference type="NCBI Taxonomy" id="44689"/>
    <lineage>
        <taxon>Eukaryota</taxon>
        <taxon>Amoebozoa</taxon>
        <taxon>Evosea</taxon>
        <taxon>Eumycetozoa</taxon>
        <taxon>Dictyostelia</taxon>
        <taxon>Dictyosteliales</taxon>
        <taxon>Dictyosteliaceae</taxon>
        <taxon>Dictyostelium</taxon>
    </lineage>
</organism>
<gene>
    <name type="primary">med24</name>
    <name type="synonym">med5</name>
    <name type="ORF">DDB_G0289971</name>
</gene>
<keyword id="KW-0010">Activator</keyword>
<keyword id="KW-0175">Coiled coil</keyword>
<keyword id="KW-0539">Nucleus</keyword>
<keyword id="KW-1185">Reference proteome</keyword>
<keyword id="KW-0804">Transcription</keyword>
<keyword id="KW-0805">Transcription regulation</keyword>